<gene>
    <name evidence="1" type="primary">infC</name>
    <name type="ordered locus">SYNW0093</name>
</gene>
<organism>
    <name type="scientific">Parasynechococcus marenigrum (strain WH8102)</name>
    <dbReference type="NCBI Taxonomy" id="84588"/>
    <lineage>
        <taxon>Bacteria</taxon>
        <taxon>Bacillati</taxon>
        <taxon>Cyanobacteriota</taxon>
        <taxon>Cyanophyceae</taxon>
        <taxon>Synechococcales</taxon>
        <taxon>Prochlorococcaceae</taxon>
        <taxon>Parasynechococcus</taxon>
        <taxon>Parasynechococcus marenigrum</taxon>
    </lineage>
</organism>
<keyword id="KW-0963">Cytoplasm</keyword>
<keyword id="KW-0396">Initiation factor</keyword>
<keyword id="KW-0648">Protein biosynthesis</keyword>
<protein>
    <recommendedName>
        <fullName evidence="1">Translation initiation factor IF-3</fullName>
    </recommendedName>
</protein>
<feature type="chain" id="PRO_0000177595" description="Translation initiation factor IF-3">
    <location>
        <begin position="1"/>
        <end position="217"/>
    </location>
</feature>
<feature type="region of interest" description="Disordered" evidence="2">
    <location>
        <begin position="179"/>
        <end position="217"/>
    </location>
</feature>
<reference key="1">
    <citation type="journal article" date="2003" name="Nature">
        <title>The genome of a motile marine Synechococcus.</title>
        <authorList>
            <person name="Palenik B."/>
            <person name="Brahamsha B."/>
            <person name="Larimer F.W."/>
            <person name="Land M.L."/>
            <person name="Hauser L."/>
            <person name="Chain P."/>
            <person name="Lamerdin J.E."/>
            <person name="Regala W."/>
            <person name="Allen E.E."/>
            <person name="McCarren J."/>
            <person name="Paulsen I.T."/>
            <person name="Dufresne A."/>
            <person name="Partensky F."/>
            <person name="Webb E.A."/>
            <person name="Waterbury J."/>
        </authorList>
    </citation>
    <scope>NUCLEOTIDE SEQUENCE [LARGE SCALE GENOMIC DNA]</scope>
    <source>
        <strain>WH8102</strain>
    </source>
</reference>
<dbReference type="EMBL" id="BX569689">
    <property type="protein sequence ID" value="CAE06608.1"/>
    <property type="molecule type" value="Genomic_DNA"/>
</dbReference>
<dbReference type="RefSeq" id="WP_011126971.1">
    <property type="nucleotide sequence ID" value="NC_005070.1"/>
</dbReference>
<dbReference type="SMR" id="Q7UA08"/>
<dbReference type="STRING" id="84588.SYNW0093"/>
<dbReference type="KEGG" id="syw:SYNW0093"/>
<dbReference type="eggNOG" id="COG0290">
    <property type="taxonomic scope" value="Bacteria"/>
</dbReference>
<dbReference type="HOGENOM" id="CLU_054919_3_1_3"/>
<dbReference type="Proteomes" id="UP000001422">
    <property type="component" value="Chromosome"/>
</dbReference>
<dbReference type="GO" id="GO:0005829">
    <property type="term" value="C:cytosol"/>
    <property type="evidence" value="ECO:0007669"/>
    <property type="project" value="TreeGrafter"/>
</dbReference>
<dbReference type="GO" id="GO:0016020">
    <property type="term" value="C:membrane"/>
    <property type="evidence" value="ECO:0007669"/>
    <property type="project" value="TreeGrafter"/>
</dbReference>
<dbReference type="GO" id="GO:0043022">
    <property type="term" value="F:ribosome binding"/>
    <property type="evidence" value="ECO:0007669"/>
    <property type="project" value="TreeGrafter"/>
</dbReference>
<dbReference type="GO" id="GO:0003743">
    <property type="term" value="F:translation initiation factor activity"/>
    <property type="evidence" value="ECO:0007669"/>
    <property type="project" value="UniProtKB-UniRule"/>
</dbReference>
<dbReference type="GO" id="GO:0032790">
    <property type="term" value="P:ribosome disassembly"/>
    <property type="evidence" value="ECO:0007669"/>
    <property type="project" value="TreeGrafter"/>
</dbReference>
<dbReference type="FunFam" id="3.10.20.80:FF:000001">
    <property type="entry name" value="Translation initiation factor IF-3"/>
    <property type="match status" value="1"/>
</dbReference>
<dbReference type="FunFam" id="3.30.110.10:FF:000001">
    <property type="entry name" value="Translation initiation factor IF-3"/>
    <property type="match status" value="1"/>
</dbReference>
<dbReference type="Gene3D" id="3.30.110.10">
    <property type="entry name" value="Translation initiation factor 3 (IF-3), C-terminal domain"/>
    <property type="match status" value="1"/>
</dbReference>
<dbReference type="Gene3D" id="3.10.20.80">
    <property type="entry name" value="Translation initiation factor 3 (IF-3), N-terminal domain"/>
    <property type="match status" value="1"/>
</dbReference>
<dbReference type="HAMAP" id="MF_00080">
    <property type="entry name" value="IF_3"/>
    <property type="match status" value="1"/>
</dbReference>
<dbReference type="InterPro" id="IPR036788">
    <property type="entry name" value="T_IF-3_C_sf"/>
</dbReference>
<dbReference type="InterPro" id="IPR036787">
    <property type="entry name" value="T_IF-3_N_sf"/>
</dbReference>
<dbReference type="InterPro" id="IPR019813">
    <property type="entry name" value="Translation_initiation_fac3_CS"/>
</dbReference>
<dbReference type="InterPro" id="IPR001288">
    <property type="entry name" value="Translation_initiation_fac_3"/>
</dbReference>
<dbReference type="InterPro" id="IPR019815">
    <property type="entry name" value="Translation_initiation_fac_3_C"/>
</dbReference>
<dbReference type="InterPro" id="IPR019814">
    <property type="entry name" value="Translation_initiation_fac_3_N"/>
</dbReference>
<dbReference type="NCBIfam" id="TIGR00168">
    <property type="entry name" value="infC"/>
    <property type="match status" value="1"/>
</dbReference>
<dbReference type="PANTHER" id="PTHR10938">
    <property type="entry name" value="TRANSLATION INITIATION FACTOR IF-3"/>
    <property type="match status" value="1"/>
</dbReference>
<dbReference type="PANTHER" id="PTHR10938:SF0">
    <property type="entry name" value="TRANSLATION INITIATION FACTOR IF-3, MITOCHONDRIAL"/>
    <property type="match status" value="1"/>
</dbReference>
<dbReference type="Pfam" id="PF00707">
    <property type="entry name" value="IF3_C"/>
    <property type="match status" value="1"/>
</dbReference>
<dbReference type="Pfam" id="PF05198">
    <property type="entry name" value="IF3_N"/>
    <property type="match status" value="1"/>
</dbReference>
<dbReference type="SUPFAM" id="SSF55200">
    <property type="entry name" value="Translation initiation factor IF3, C-terminal domain"/>
    <property type="match status" value="1"/>
</dbReference>
<dbReference type="SUPFAM" id="SSF54364">
    <property type="entry name" value="Translation initiation factor IF3, N-terminal domain"/>
    <property type="match status" value="1"/>
</dbReference>
<dbReference type="PROSITE" id="PS00938">
    <property type="entry name" value="IF3"/>
    <property type="match status" value="1"/>
</dbReference>
<name>IF3_PARMW</name>
<proteinExistence type="inferred from homology"/>
<sequence>MPPRPRFDRRAPVRELPNINDRISYPQLRVVDSDGSQLGVISREEALEVAKERELDLVLVSEKADPPVCRIMDYGKFKFEQEKKAKEAKKKSHQTEVKEVKMRYKIDQHDYDVRIGQAVRFLKAGDKVKCTVIFRGREIQHTALAETLLRRMAKDLEEKAEIQQAPKREGRNMIMFLTPRKTPLVKKEEKEAAPTKAVRTIPAPPRPTAAKVAAQQA</sequence>
<comment type="function">
    <text evidence="1">IF-3 binds to the 30S ribosomal subunit and shifts the equilibrium between 70S ribosomes and their 50S and 30S subunits in favor of the free subunits, thus enhancing the availability of 30S subunits on which protein synthesis initiation begins.</text>
</comment>
<comment type="subunit">
    <text evidence="1">Monomer.</text>
</comment>
<comment type="subcellular location">
    <subcellularLocation>
        <location evidence="1">Cytoplasm</location>
    </subcellularLocation>
</comment>
<comment type="similarity">
    <text evidence="1">Belongs to the IF-3 family.</text>
</comment>
<evidence type="ECO:0000255" key="1">
    <source>
        <dbReference type="HAMAP-Rule" id="MF_00080"/>
    </source>
</evidence>
<evidence type="ECO:0000256" key="2">
    <source>
        <dbReference type="SAM" id="MobiDB-lite"/>
    </source>
</evidence>
<accession>Q7UA08</accession>